<keyword id="KW-0067">ATP-binding</keyword>
<keyword id="KW-0436">Ligase</keyword>
<keyword id="KW-0547">Nucleotide-binding</keyword>
<keyword id="KW-0658">Purine biosynthesis</keyword>
<name>PUR7_DESHD</name>
<gene>
    <name evidence="1" type="primary">purC</name>
    <name type="ordered locus">Dhaf_1474</name>
</gene>
<proteinExistence type="inferred from homology"/>
<sequence length="238" mass="27109">MEKGQMLYEGKAKKVYTTDQEGIYWVEYKDDATAFNGEKKGTIGDKGIVNNRLSALLFEVLEKTGIPTHFIELLNDREMLVRKLEMIPLEVVVRNIAAGSLAKRLGVAEGLNLSRPVVELYYKDDALGDPFVNESHSLAMGWAEQSDLKEIQELGLKINGELQKILDQAGIILVDFKLEFGKAEGKVYLGDEISPDTCRFWDKETQEKLDKDRFRRDLGKVEEAYAEVYRRVKEVLKD</sequence>
<dbReference type="EC" id="6.3.2.6" evidence="1"/>
<dbReference type="EMBL" id="CP001336">
    <property type="protein sequence ID" value="ACL19526.1"/>
    <property type="molecule type" value="Genomic_DNA"/>
</dbReference>
<dbReference type="RefSeq" id="WP_015943458.1">
    <property type="nucleotide sequence ID" value="NC_011830.1"/>
</dbReference>
<dbReference type="SMR" id="B8FP01"/>
<dbReference type="KEGG" id="dhd:Dhaf_1474"/>
<dbReference type="HOGENOM" id="CLU_061495_2_0_9"/>
<dbReference type="UniPathway" id="UPA00074">
    <property type="reaction ID" value="UER00131"/>
</dbReference>
<dbReference type="Proteomes" id="UP000007726">
    <property type="component" value="Chromosome"/>
</dbReference>
<dbReference type="GO" id="GO:0005524">
    <property type="term" value="F:ATP binding"/>
    <property type="evidence" value="ECO:0007669"/>
    <property type="project" value="UniProtKB-KW"/>
</dbReference>
<dbReference type="GO" id="GO:0004639">
    <property type="term" value="F:phosphoribosylaminoimidazolesuccinocarboxamide synthase activity"/>
    <property type="evidence" value="ECO:0007669"/>
    <property type="project" value="UniProtKB-UniRule"/>
</dbReference>
<dbReference type="GO" id="GO:0006189">
    <property type="term" value="P:'de novo' IMP biosynthetic process"/>
    <property type="evidence" value="ECO:0007669"/>
    <property type="project" value="UniProtKB-UniRule"/>
</dbReference>
<dbReference type="GO" id="GO:0009236">
    <property type="term" value="P:cobalamin biosynthetic process"/>
    <property type="evidence" value="ECO:0007669"/>
    <property type="project" value="InterPro"/>
</dbReference>
<dbReference type="CDD" id="cd01415">
    <property type="entry name" value="SAICAR_synt_PurC"/>
    <property type="match status" value="1"/>
</dbReference>
<dbReference type="FunFam" id="3.30.470.20:FF:000006">
    <property type="entry name" value="Phosphoribosylaminoimidazole-succinocarboxamide synthase"/>
    <property type="match status" value="1"/>
</dbReference>
<dbReference type="Gene3D" id="3.30.470.20">
    <property type="entry name" value="ATP-grasp fold, B domain"/>
    <property type="match status" value="1"/>
</dbReference>
<dbReference type="Gene3D" id="3.30.200.20">
    <property type="entry name" value="Phosphorylase Kinase, domain 1"/>
    <property type="match status" value="1"/>
</dbReference>
<dbReference type="HAMAP" id="MF_00137">
    <property type="entry name" value="SAICAR_synth"/>
    <property type="match status" value="1"/>
</dbReference>
<dbReference type="InterPro" id="IPR028923">
    <property type="entry name" value="SAICAR_synt/ADE2_N"/>
</dbReference>
<dbReference type="InterPro" id="IPR033934">
    <property type="entry name" value="SAICAR_synt_PurC"/>
</dbReference>
<dbReference type="InterPro" id="IPR001636">
    <property type="entry name" value="SAICAR_synth"/>
</dbReference>
<dbReference type="InterPro" id="IPR050089">
    <property type="entry name" value="SAICAR_synthetase"/>
</dbReference>
<dbReference type="InterPro" id="IPR018236">
    <property type="entry name" value="SAICAR_synthetase_CS"/>
</dbReference>
<dbReference type="NCBIfam" id="TIGR00081">
    <property type="entry name" value="purC"/>
    <property type="match status" value="1"/>
</dbReference>
<dbReference type="PANTHER" id="PTHR43599">
    <property type="entry name" value="MULTIFUNCTIONAL PROTEIN ADE2"/>
    <property type="match status" value="1"/>
</dbReference>
<dbReference type="PANTHER" id="PTHR43599:SF3">
    <property type="entry name" value="SI:DKEY-6E2.2"/>
    <property type="match status" value="1"/>
</dbReference>
<dbReference type="Pfam" id="PF01259">
    <property type="entry name" value="SAICAR_synt"/>
    <property type="match status" value="1"/>
</dbReference>
<dbReference type="SUPFAM" id="SSF56104">
    <property type="entry name" value="SAICAR synthase-like"/>
    <property type="match status" value="1"/>
</dbReference>
<dbReference type="PROSITE" id="PS01057">
    <property type="entry name" value="SAICAR_SYNTHETASE_1"/>
    <property type="match status" value="1"/>
</dbReference>
<dbReference type="PROSITE" id="PS01058">
    <property type="entry name" value="SAICAR_SYNTHETASE_2"/>
    <property type="match status" value="1"/>
</dbReference>
<reference key="1">
    <citation type="journal article" date="2012" name="BMC Microbiol.">
        <title>Genome sequence of Desulfitobacterium hafniense DCB-2, a Gram-positive anaerobe capable of dehalogenation and metal reduction.</title>
        <authorList>
            <person name="Kim S.H."/>
            <person name="Harzman C."/>
            <person name="Davis J.K."/>
            <person name="Hutcheson R."/>
            <person name="Broderick J.B."/>
            <person name="Marsh T.L."/>
            <person name="Tiedje J.M."/>
        </authorList>
    </citation>
    <scope>NUCLEOTIDE SEQUENCE [LARGE SCALE GENOMIC DNA]</scope>
    <source>
        <strain>DSM 10664 / DCB-2</strain>
    </source>
</reference>
<protein>
    <recommendedName>
        <fullName evidence="1">Phosphoribosylaminoimidazole-succinocarboxamide synthase</fullName>
        <ecNumber evidence="1">6.3.2.6</ecNumber>
    </recommendedName>
    <alternativeName>
        <fullName evidence="1">SAICAR synthetase</fullName>
    </alternativeName>
</protein>
<evidence type="ECO:0000255" key="1">
    <source>
        <dbReference type="HAMAP-Rule" id="MF_00137"/>
    </source>
</evidence>
<organism>
    <name type="scientific">Desulfitobacterium hafniense (strain DSM 10664 / DCB-2)</name>
    <dbReference type="NCBI Taxonomy" id="272564"/>
    <lineage>
        <taxon>Bacteria</taxon>
        <taxon>Bacillati</taxon>
        <taxon>Bacillota</taxon>
        <taxon>Clostridia</taxon>
        <taxon>Eubacteriales</taxon>
        <taxon>Desulfitobacteriaceae</taxon>
        <taxon>Desulfitobacterium</taxon>
    </lineage>
</organism>
<accession>B8FP01</accession>
<comment type="catalytic activity">
    <reaction evidence="1">
        <text>5-amino-1-(5-phospho-D-ribosyl)imidazole-4-carboxylate + L-aspartate + ATP = (2S)-2-[5-amino-1-(5-phospho-beta-D-ribosyl)imidazole-4-carboxamido]succinate + ADP + phosphate + 2 H(+)</text>
        <dbReference type="Rhea" id="RHEA:22628"/>
        <dbReference type="ChEBI" id="CHEBI:15378"/>
        <dbReference type="ChEBI" id="CHEBI:29991"/>
        <dbReference type="ChEBI" id="CHEBI:30616"/>
        <dbReference type="ChEBI" id="CHEBI:43474"/>
        <dbReference type="ChEBI" id="CHEBI:58443"/>
        <dbReference type="ChEBI" id="CHEBI:77657"/>
        <dbReference type="ChEBI" id="CHEBI:456216"/>
        <dbReference type="EC" id="6.3.2.6"/>
    </reaction>
</comment>
<comment type="pathway">
    <text evidence="1">Purine metabolism; IMP biosynthesis via de novo pathway; 5-amino-1-(5-phospho-D-ribosyl)imidazole-4-carboxamide from 5-amino-1-(5-phospho-D-ribosyl)imidazole-4-carboxylate: step 1/2.</text>
</comment>
<comment type="similarity">
    <text evidence="1">Belongs to the SAICAR synthetase family.</text>
</comment>
<feature type="chain" id="PRO_1000122912" description="Phosphoribosylaminoimidazole-succinocarboxamide synthase">
    <location>
        <begin position="1"/>
        <end position="238"/>
    </location>
</feature>